<accession>A4JAR5</accession>
<gene>
    <name evidence="1" type="primary">rpsD</name>
    <name type="ordered locus">Bcep1808_0355</name>
</gene>
<keyword id="KW-0687">Ribonucleoprotein</keyword>
<keyword id="KW-0689">Ribosomal protein</keyword>
<keyword id="KW-0694">RNA-binding</keyword>
<keyword id="KW-0699">rRNA-binding</keyword>
<proteinExistence type="inferred from homology"/>
<sequence length="207" mass="23200">MARYIGPKAKLSRREGTDLFLKSARRSLADKCKLDSKPGQHGRTSGARTSDYGTQLREKQKVKRIYGVLERQFRRYFAEADRRKGNTGENLLQLLESRLDNVVYRMGFGSTRAEARQLVSHKSITVNGVVANVPSQQVKAGDVIAIREKAKKQARIIEALSLAEQGGMPSWVAVDAKKFEGTFKQMPERADIAGDINESLIVELYSR</sequence>
<dbReference type="EMBL" id="CP000614">
    <property type="protein sequence ID" value="ABO53368.1"/>
    <property type="status" value="ALT_INIT"/>
    <property type="molecule type" value="Genomic_DNA"/>
</dbReference>
<dbReference type="SMR" id="A4JAR5"/>
<dbReference type="KEGG" id="bvi:Bcep1808_0355"/>
<dbReference type="eggNOG" id="COG0522">
    <property type="taxonomic scope" value="Bacteria"/>
</dbReference>
<dbReference type="HOGENOM" id="CLU_092403_0_2_4"/>
<dbReference type="Proteomes" id="UP000002287">
    <property type="component" value="Chromosome 1"/>
</dbReference>
<dbReference type="GO" id="GO:0015935">
    <property type="term" value="C:small ribosomal subunit"/>
    <property type="evidence" value="ECO:0007669"/>
    <property type="project" value="InterPro"/>
</dbReference>
<dbReference type="GO" id="GO:0019843">
    <property type="term" value="F:rRNA binding"/>
    <property type="evidence" value="ECO:0007669"/>
    <property type="project" value="UniProtKB-UniRule"/>
</dbReference>
<dbReference type="GO" id="GO:0003735">
    <property type="term" value="F:structural constituent of ribosome"/>
    <property type="evidence" value="ECO:0007669"/>
    <property type="project" value="InterPro"/>
</dbReference>
<dbReference type="GO" id="GO:0042274">
    <property type="term" value="P:ribosomal small subunit biogenesis"/>
    <property type="evidence" value="ECO:0007669"/>
    <property type="project" value="TreeGrafter"/>
</dbReference>
<dbReference type="GO" id="GO:0006412">
    <property type="term" value="P:translation"/>
    <property type="evidence" value="ECO:0007669"/>
    <property type="project" value="UniProtKB-UniRule"/>
</dbReference>
<dbReference type="CDD" id="cd00165">
    <property type="entry name" value="S4"/>
    <property type="match status" value="1"/>
</dbReference>
<dbReference type="FunFam" id="1.10.1050.10:FF:000001">
    <property type="entry name" value="30S ribosomal protein S4"/>
    <property type="match status" value="1"/>
</dbReference>
<dbReference type="FunFam" id="3.10.290.10:FF:000001">
    <property type="entry name" value="30S ribosomal protein S4"/>
    <property type="match status" value="1"/>
</dbReference>
<dbReference type="Gene3D" id="1.10.1050.10">
    <property type="entry name" value="Ribosomal Protein S4 Delta 41, Chain A, domain 1"/>
    <property type="match status" value="1"/>
</dbReference>
<dbReference type="Gene3D" id="3.10.290.10">
    <property type="entry name" value="RNA-binding S4 domain"/>
    <property type="match status" value="1"/>
</dbReference>
<dbReference type="HAMAP" id="MF_01306_B">
    <property type="entry name" value="Ribosomal_uS4_B"/>
    <property type="match status" value="1"/>
</dbReference>
<dbReference type="InterPro" id="IPR022801">
    <property type="entry name" value="Ribosomal_uS4"/>
</dbReference>
<dbReference type="InterPro" id="IPR005709">
    <property type="entry name" value="Ribosomal_uS4_bac-type"/>
</dbReference>
<dbReference type="InterPro" id="IPR018079">
    <property type="entry name" value="Ribosomal_uS4_CS"/>
</dbReference>
<dbReference type="InterPro" id="IPR001912">
    <property type="entry name" value="Ribosomal_uS4_N"/>
</dbReference>
<dbReference type="InterPro" id="IPR002942">
    <property type="entry name" value="S4_RNA-bd"/>
</dbReference>
<dbReference type="InterPro" id="IPR036986">
    <property type="entry name" value="S4_RNA-bd_sf"/>
</dbReference>
<dbReference type="NCBIfam" id="NF003717">
    <property type="entry name" value="PRK05327.1"/>
    <property type="match status" value="1"/>
</dbReference>
<dbReference type="NCBIfam" id="TIGR01017">
    <property type="entry name" value="rpsD_bact"/>
    <property type="match status" value="1"/>
</dbReference>
<dbReference type="PANTHER" id="PTHR11831">
    <property type="entry name" value="30S 40S RIBOSOMAL PROTEIN"/>
    <property type="match status" value="1"/>
</dbReference>
<dbReference type="PANTHER" id="PTHR11831:SF4">
    <property type="entry name" value="SMALL RIBOSOMAL SUBUNIT PROTEIN US4M"/>
    <property type="match status" value="1"/>
</dbReference>
<dbReference type="Pfam" id="PF00163">
    <property type="entry name" value="Ribosomal_S4"/>
    <property type="match status" value="1"/>
</dbReference>
<dbReference type="Pfam" id="PF01479">
    <property type="entry name" value="S4"/>
    <property type="match status" value="1"/>
</dbReference>
<dbReference type="SMART" id="SM01390">
    <property type="entry name" value="Ribosomal_S4"/>
    <property type="match status" value="1"/>
</dbReference>
<dbReference type="SMART" id="SM00363">
    <property type="entry name" value="S4"/>
    <property type="match status" value="1"/>
</dbReference>
<dbReference type="SUPFAM" id="SSF55174">
    <property type="entry name" value="Alpha-L RNA-binding motif"/>
    <property type="match status" value="1"/>
</dbReference>
<dbReference type="PROSITE" id="PS00632">
    <property type="entry name" value="RIBOSOMAL_S4"/>
    <property type="match status" value="1"/>
</dbReference>
<dbReference type="PROSITE" id="PS50889">
    <property type="entry name" value="S4"/>
    <property type="match status" value="1"/>
</dbReference>
<protein>
    <recommendedName>
        <fullName evidence="1">Small ribosomal subunit protein uS4</fullName>
    </recommendedName>
    <alternativeName>
        <fullName evidence="3">30S ribosomal protein S4</fullName>
    </alternativeName>
</protein>
<evidence type="ECO:0000255" key="1">
    <source>
        <dbReference type="HAMAP-Rule" id="MF_01306"/>
    </source>
</evidence>
<evidence type="ECO:0000256" key="2">
    <source>
        <dbReference type="SAM" id="MobiDB-lite"/>
    </source>
</evidence>
<evidence type="ECO:0000305" key="3"/>
<comment type="function">
    <text evidence="1">One of the primary rRNA binding proteins, it binds directly to 16S rRNA where it nucleates assembly of the body of the 30S subunit.</text>
</comment>
<comment type="function">
    <text evidence="1">With S5 and S12 plays an important role in translational accuracy.</text>
</comment>
<comment type="subunit">
    <text evidence="1">Part of the 30S ribosomal subunit. Contacts protein S5. The interaction surface between S4 and S5 is involved in control of translational fidelity.</text>
</comment>
<comment type="similarity">
    <text evidence="1">Belongs to the universal ribosomal protein uS4 family.</text>
</comment>
<comment type="sequence caution" evidence="3">
    <conflict type="erroneous initiation">
        <sequence resource="EMBL-CDS" id="ABO53368"/>
    </conflict>
</comment>
<name>RS4_BURVG</name>
<organism>
    <name type="scientific">Burkholderia vietnamiensis (strain G4 / LMG 22486)</name>
    <name type="common">Burkholderia cepacia (strain R1808)</name>
    <dbReference type="NCBI Taxonomy" id="269482"/>
    <lineage>
        <taxon>Bacteria</taxon>
        <taxon>Pseudomonadati</taxon>
        <taxon>Pseudomonadota</taxon>
        <taxon>Betaproteobacteria</taxon>
        <taxon>Burkholderiales</taxon>
        <taxon>Burkholderiaceae</taxon>
        <taxon>Burkholderia</taxon>
        <taxon>Burkholderia cepacia complex</taxon>
    </lineage>
</organism>
<feature type="chain" id="PRO_0000322277" description="Small ribosomal subunit protein uS4">
    <location>
        <begin position="1"/>
        <end position="207"/>
    </location>
</feature>
<feature type="domain" description="S4 RNA-binding" evidence="1">
    <location>
        <begin position="97"/>
        <end position="160"/>
    </location>
</feature>
<feature type="region of interest" description="Disordered" evidence="2">
    <location>
        <begin position="31"/>
        <end position="55"/>
    </location>
</feature>
<feature type="compositionally biased region" description="Polar residues" evidence="2">
    <location>
        <begin position="42"/>
        <end position="53"/>
    </location>
</feature>
<reference key="1">
    <citation type="submission" date="2007-03" db="EMBL/GenBank/DDBJ databases">
        <title>Complete sequence of chromosome 1 of Burkholderia vietnamiensis G4.</title>
        <authorList>
            <consortium name="US DOE Joint Genome Institute"/>
            <person name="Copeland A."/>
            <person name="Lucas S."/>
            <person name="Lapidus A."/>
            <person name="Barry K."/>
            <person name="Detter J.C."/>
            <person name="Glavina del Rio T."/>
            <person name="Hammon N."/>
            <person name="Israni S."/>
            <person name="Dalin E."/>
            <person name="Tice H."/>
            <person name="Pitluck S."/>
            <person name="Chain P."/>
            <person name="Malfatti S."/>
            <person name="Shin M."/>
            <person name="Vergez L."/>
            <person name="Schmutz J."/>
            <person name="Larimer F."/>
            <person name="Land M."/>
            <person name="Hauser L."/>
            <person name="Kyrpides N."/>
            <person name="Tiedje J."/>
            <person name="Richardson P."/>
        </authorList>
    </citation>
    <scope>NUCLEOTIDE SEQUENCE [LARGE SCALE GENOMIC DNA]</scope>
    <source>
        <strain>G4 / LMG 22486</strain>
    </source>
</reference>